<sequence length="379" mass="39566">MAPTTTATAAAEQAPPPQHTRKAVGLAAHDDSGHLTPIRISRRKTGDDDVAIKVLYCGICHSDLHTIKNEWRNAVYPVVAGHEITGVVTEVGKNVARFKAGDEVGVGCMVNTCGGCESCRDGCENYCSGGVVFTYNSVDRDGTRTYGGYSDAVVVSQRFVVRFPSSAGGGAGAALPLDSGAPLLCAGVTVYAPMRQHGLCEAGKHVGVVGLGGLGHVAVKFARAFGMRVTVISTSPVKRQEALERLGADGFIVSTNASEMKAAMGTMHGIINTASASTSMHSYLALLKPKGKMILVGLPEKPLQIPTFALVGGGKILAGSCMGSISETQEMIDFAAEHGVAADIELIGADEVNTAMERLAKGDVRYRFVVDIGNTLRSD</sequence>
<dbReference type="EC" id="1.1.1.195" evidence="3"/>
<dbReference type="EMBL" id="AL731610">
    <property type="protein sequence ID" value="CAE05206.3"/>
    <property type="status" value="ALT_SEQ"/>
    <property type="molecule type" value="Genomic_DNA"/>
</dbReference>
<dbReference type="EMBL" id="AP008210">
    <property type="protein sequence ID" value="BAF15762.1"/>
    <property type="molecule type" value="Genomic_DNA"/>
</dbReference>
<dbReference type="EMBL" id="AP014960">
    <property type="protein sequence ID" value="BAS90969.1"/>
    <property type="molecule type" value="Genomic_DNA"/>
</dbReference>
<dbReference type="EMBL" id="AK102452">
    <property type="protein sequence ID" value="BAG95561.1"/>
    <property type="molecule type" value="mRNA"/>
</dbReference>
<dbReference type="RefSeq" id="XP_015635610.1">
    <property type="nucleotide sequence ID" value="XM_015780124.1"/>
</dbReference>
<dbReference type="SMR" id="Q0JA75"/>
<dbReference type="FunCoup" id="Q0JA75">
    <property type="interactions" value="35"/>
</dbReference>
<dbReference type="STRING" id="39947.Q0JA75"/>
<dbReference type="PaxDb" id="39947-Q0JA75"/>
<dbReference type="EnsemblPlants" id="Os04t0612700-01">
    <property type="protein sequence ID" value="Os04t0612700-01"/>
    <property type="gene ID" value="Os04g0612700"/>
</dbReference>
<dbReference type="Gramene" id="Os04t0612700-01">
    <property type="protein sequence ID" value="Os04t0612700-01"/>
    <property type="gene ID" value="Os04g0612700"/>
</dbReference>
<dbReference type="KEGG" id="dosa:Os04g0612700"/>
<dbReference type="eggNOG" id="KOG0023">
    <property type="taxonomic scope" value="Eukaryota"/>
</dbReference>
<dbReference type="HOGENOM" id="CLU_026673_20_2_1"/>
<dbReference type="InParanoid" id="Q0JA75"/>
<dbReference type="OMA" id="KKDFAFQ"/>
<dbReference type="OrthoDB" id="1879366at2759"/>
<dbReference type="BRENDA" id="1.1.1.195">
    <property type="organism ID" value="8948"/>
</dbReference>
<dbReference type="UniPathway" id="UPA00711"/>
<dbReference type="Proteomes" id="UP000000763">
    <property type="component" value="Chromosome 4"/>
</dbReference>
<dbReference type="Proteomes" id="UP000059680">
    <property type="component" value="Chromosome 4"/>
</dbReference>
<dbReference type="GO" id="GO:0045551">
    <property type="term" value="F:cinnamyl-alcohol dehydrogenase activity"/>
    <property type="evidence" value="ECO:0000315"/>
    <property type="project" value="UniProtKB"/>
</dbReference>
<dbReference type="GO" id="GO:0050268">
    <property type="term" value="F:coniferyl-alcohol dehydrogenase activity"/>
    <property type="evidence" value="ECO:0007669"/>
    <property type="project" value="RHEA"/>
</dbReference>
<dbReference type="GO" id="GO:0008270">
    <property type="term" value="F:zinc ion binding"/>
    <property type="evidence" value="ECO:0007669"/>
    <property type="project" value="InterPro"/>
</dbReference>
<dbReference type="GO" id="GO:0009809">
    <property type="term" value="P:lignin biosynthetic process"/>
    <property type="evidence" value="ECO:0000315"/>
    <property type="project" value="UniProtKB"/>
</dbReference>
<dbReference type="CDD" id="cd05283">
    <property type="entry name" value="CAD1"/>
    <property type="match status" value="1"/>
</dbReference>
<dbReference type="FunFam" id="3.40.50.720:FF:000022">
    <property type="entry name" value="Cinnamyl alcohol dehydrogenase"/>
    <property type="match status" value="1"/>
</dbReference>
<dbReference type="FunFam" id="3.90.180.10:FF:000004">
    <property type="entry name" value="probable cinnamyl alcohol dehydrogenase"/>
    <property type="match status" value="1"/>
</dbReference>
<dbReference type="Gene3D" id="3.90.180.10">
    <property type="entry name" value="Medium-chain alcohol dehydrogenases, catalytic domain"/>
    <property type="match status" value="1"/>
</dbReference>
<dbReference type="Gene3D" id="3.40.50.720">
    <property type="entry name" value="NAD(P)-binding Rossmann-like Domain"/>
    <property type="match status" value="1"/>
</dbReference>
<dbReference type="InterPro" id="IPR013149">
    <property type="entry name" value="ADH-like_C"/>
</dbReference>
<dbReference type="InterPro" id="IPR013154">
    <property type="entry name" value="ADH-like_N"/>
</dbReference>
<dbReference type="InterPro" id="IPR002328">
    <property type="entry name" value="ADH_Zn_CS"/>
</dbReference>
<dbReference type="InterPro" id="IPR047109">
    <property type="entry name" value="CAD-like"/>
</dbReference>
<dbReference type="InterPro" id="IPR011032">
    <property type="entry name" value="GroES-like_sf"/>
</dbReference>
<dbReference type="InterPro" id="IPR036291">
    <property type="entry name" value="NAD(P)-bd_dom_sf"/>
</dbReference>
<dbReference type="InterPro" id="IPR020843">
    <property type="entry name" value="PKS_ER"/>
</dbReference>
<dbReference type="PANTHER" id="PTHR42683">
    <property type="entry name" value="ALDEHYDE REDUCTASE"/>
    <property type="match status" value="1"/>
</dbReference>
<dbReference type="Pfam" id="PF08240">
    <property type="entry name" value="ADH_N"/>
    <property type="match status" value="1"/>
</dbReference>
<dbReference type="Pfam" id="PF00107">
    <property type="entry name" value="ADH_zinc_N"/>
    <property type="match status" value="1"/>
</dbReference>
<dbReference type="SMART" id="SM00829">
    <property type="entry name" value="PKS_ER"/>
    <property type="match status" value="1"/>
</dbReference>
<dbReference type="SUPFAM" id="SSF50129">
    <property type="entry name" value="GroES-like"/>
    <property type="match status" value="1"/>
</dbReference>
<dbReference type="SUPFAM" id="SSF51735">
    <property type="entry name" value="NAD(P)-binding Rossmann-fold domains"/>
    <property type="match status" value="1"/>
</dbReference>
<dbReference type="PROSITE" id="PS00059">
    <property type="entry name" value="ADH_ZINC"/>
    <property type="match status" value="1"/>
</dbReference>
<comment type="function">
    <text evidence="3">Involved in lignin biosynthesis. May catalyze the final step specific for the production of lignin monomers, like coniferyl alcohol, sinapyl alcohol and 4-coumaryl alcohol.</text>
</comment>
<comment type="catalytic activity">
    <reaction evidence="3">
        <text>(E)-cinnamyl alcohol + NADP(+) = (E)-cinnamaldehyde + NADPH + H(+)</text>
        <dbReference type="Rhea" id="RHEA:10392"/>
        <dbReference type="ChEBI" id="CHEBI:15378"/>
        <dbReference type="ChEBI" id="CHEBI:16731"/>
        <dbReference type="ChEBI" id="CHEBI:33227"/>
        <dbReference type="ChEBI" id="CHEBI:57783"/>
        <dbReference type="ChEBI" id="CHEBI:58349"/>
        <dbReference type="EC" id="1.1.1.195"/>
    </reaction>
    <physiologicalReaction direction="right-to-left" evidence="3">
        <dbReference type="Rhea" id="RHEA:10394"/>
    </physiologicalReaction>
</comment>
<comment type="catalytic activity">
    <reaction evidence="3">
        <text>(E)-coniferol + NADP(+) = (E)-coniferaldehyde + NADPH + H(+)</text>
        <dbReference type="Rhea" id="RHEA:22444"/>
        <dbReference type="ChEBI" id="CHEBI:15378"/>
        <dbReference type="ChEBI" id="CHEBI:16547"/>
        <dbReference type="ChEBI" id="CHEBI:17745"/>
        <dbReference type="ChEBI" id="CHEBI:57783"/>
        <dbReference type="ChEBI" id="CHEBI:58349"/>
        <dbReference type="EC" id="1.1.1.195"/>
    </reaction>
    <physiologicalReaction direction="right-to-left" evidence="3">
        <dbReference type="Rhea" id="RHEA:22446"/>
    </physiologicalReaction>
</comment>
<comment type="catalytic activity">
    <reaction evidence="3">
        <text>(E)-sinapyl alcohol + NADP(+) = (E)-sinapaldehyde + NADPH + H(+)</text>
        <dbReference type="Rhea" id="RHEA:45704"/>
        <dbReference type="ChEBI" id="CHEBI:15378"/>
        <dbReference type="ChEBI" id="CHEBI:27949"/>
        <dbReference type="ChEBI" id="CHEBI:57783"/>
        <dbReference type="ChEBI" id="CHEBI:58349"/>
        <dbReference type="ChEBI" id="CHEBI:64557"/>
        <dbReference type="EC" id="1.1.1.195"/>
    </reaction>
    <physiologicalReaction direction="right-to-left" evidence="3">
        <dbReference type="Rhea" id="RHEA:45706"/>
    </physiologicalReaction>
</comment>
<comment type="catalytic activity">
    <reaction evidence="3">
        <text>(E)-4-coumaroyl alcohol + NADP(+) = (E)-4-coumaraldehyde + NADPH + H(+)</text>
        <dbReference type="Rhea" id="RHEA:45724"/>
        <dbReference type="ChEBI" id="CHEBI:15378"/>
        <dbReference type="ChEBI" id="CHEBI:28353"/>
        <dbReference type="ChEBI" id="CHEBI:57783"/>
        <dbReference type="ChEBI" id="CHEBI:58349"/>
        <dbReference type="ChEBI" id="CHEBI:64555"/>
        <dbReference type="EC" id="1.1.1.195"/>
    </reaction>
    <physiologicalReaction direction="right-to-left" evidence="3">
        <dbReference type="Rhea" id="RHEA:45726"/>
    </physiologicalReaction>
</comment>
<comment type="catalytic activity">
    <reaction evidence="3">
        <text>(E)-caffeyl alcohol + NADP(+) = (E)-caffeyl aldehyde + NADPH + H(+)</text>
        <dbReference type="Rhea" id="RHEA:45728"/>
        <dbReference type="ChEBI" id="CHEBI:15378"/>
        <dbReference type="ChEBI" id="CHEBI:28323"/>
        <dbReference type="ChEBI" id="CHEBI:31334"/>
        <dbReference type="ChEBI" id="CHEBI:57783"/>
        <dbReference type="ChEBI" id="CHEBI:58349"/>
    </reaction>
    <physiologicalReaction direction="right-to-left" evidence="3">
        <dbReference type="Rhea" id="RHEA:45730"/>
    </physiologicalReaction>
</comment>
<comment type="cofactor">
    <cofactor evidence="1">
        <name>Zn(2+)</name>
        <dbReference type="ChEBI" id="CHEBI:29105"/>
    </cofactor>
    <text evidence="1">Binds 2 Zn(2+) ions per subunit.</text>
</comment>
<comment type="pathway">
    <text evidence="3">Aromatic compound metabolism; phenylpropanoid biosynthesis.</text>
</comment>
<comment type="subunit">
    <text evidence="1">Homodimer.</text>
</comment>
<comment type="tissue specificity">
    <text evidence="3">Expressed in roots, first internodes and panicles. Expressed in the vascular bundles and sclerenchyma cells below the epidermis in leaves and stems.</text>
</comment>
<comment type="disruption phenotype">
    <text evidence="3">Reduced lignin content, late heading time, semi-dwarf and flexible culm.</text>
</comment>
<comment type="similarity">
    <text evidence="6">Belongs to the zinc-containing alcohol dehydrogenase family.</text>
</comment>
<comment type="sequence caution" evidence="6">
    <conflict type="erroneous gene model prediction">
        <sequence resource="EMBL-CDS" id="CAE05206"/>
    </conflict>
</comment>
<evidence type="ECO:0000250" key="1">
    <source>
        <dbReference type="UniProtKB" id="O49482"/>
    </source>
</evidence>
<evidence type="ECO:0000256" key="2">
    <source>
        <dbReference type="SAM" id="MobiDB-lite"/>
    </source>
</evidence>
<evidence type="ECO:0000269" key="3">
    <source>
    </source>
</evidence>
<evidence type="ECO:0000303" key="4">
    <source>
    </source>
</evidence>
<evidence type="ECO:0000303" key="5">
    <source>
    </source>
</evidence>
<evidence type="ECO:0000305" key="6"/>
<protein>
    <recommendedName>
        <fullName evidence="6">Cinnamyl alcohol dehydrogenase 7</fullName>
        <shortName evidence="4">OsCAD7</shortName>
        <ecNumber evidence="3">1.1.1.195</ecNumber>
    </recommendedName>
    <alternativeName>
        <fullName evidence="5">Protein FLEXIBLE CULM 1</fullName>
    </alternativeName>
</protein>
<organism>
    <name type="scientific">Oryza sativa subsp. japonica</name>
    <name type="common">Rice</name>
    <dbReference type="NCBI Taxonomy" id="39947"/>
    <lineage>
        <taxon>Eukaryota</taxon>
        <taxon>Viridiplantae</taxon>
        <taxon>Streptophyta</taxon>
        <taxon>Embryophyta</taxon>
        <taxon>Tracheophyta</taxon>
        <taxon>Spermatophyta</taxon>
        <taxon>Magnoliopsida</taxon>
        <taxon>Liliopsida</taxon>
        <taxon>Poales</taxon>
        <taxon>Poaceae</taxon>
        <taxon>BOP clade</taxon>
        <taxon>Oryzoideae</taxon>
        <taxon>Oryzeae</taxon>
        <taxon>Oryzinae</taxon>
        <taxon>Oryza</taxon>
        <taxon>Oryza sativa</taxon>
    </lineage>
</organism>
<name>CADH7_ORYSJ</name>
<feature type="chain" id="PRO_0000382646" description="Cinnamyl alcohol dehydrogenase 7">
    <location>
        <begin position="1"/>
        <end position="379"/>
    </location>
</feature>
<feature type="region of interest" description="Disordered" evidence="2">
    <location>
        <begin position="1"/>
        <end position="21"/>
    </location>
</feature>
<feature type="compositionally biased region" description="Low complexity" evidence="2">
    <location>
        <begin position="1"/>
        <end position="13"/>
    </location>
</feature>
<feature type="binding site" evidence="1">
    <location>
        <position position="60"/>
    </location>
    <ligand>
        <name>Zn(2+)</name>
        <dbReference type="ChEBI" id="CHEBI:29105"/>
        <label>1</label>
        <note>catalytic</note>
    </ligand>
</feature>
<feature type="binding site" evidence="1">
    <location>
        <position position="62"/>
    </location>
    <ligand>
        <name>NADP(+)</name>
        <dbReference type="ChEBI" id="CHEBI:58349"/>
    </ligand>
</feature>
<feature type="binding site" evidence="1">
    <location>
        <position position="82"/>
    </location>
    <ligand>
        <name>Zn(2+)</name>
        <dbReference type="ChEBI" id="CHEBI:29105"/>
        <label>1</label>
        <note>catalytic</note>
    </ligand>
</feature>
<feature type="binding site" evidence="1">
    <location>
        <position position="83"/>
    </location>
    <ligand>
        <name>Zn(2+)</name>
        <dbReference type="ChEBI" id="CHEBI:29105"/>
        <label>1</label>
        <note>catalytic</note>
    </ligand>
</feature>
<feature type="binding site" evidence="1">
    <location>
        <position position="113"/>
    </location>
    <ligand>
        <name>Zn(2+)</name>
        <dbReference type="ChEBI" id="CHEBI:29105"/>
        <label>2</label>
    </ligand>
</feature>
<feature type="binding site" evidence="1">
    <location>
        <position position="116"/>
    </location>
    <ligand>
        <name>Zn(2+)</name>
        <dbReference type="ChEBI" id="CHEBI:29105"/>
        <label>2</label>
    </ligand>
</feature>
<feature type="binding site" evidence="1">
    <location>
        <position position="119"/>
    </location>
    <ligand>
        <name>Zn(2+)</name>
        <dbReference type="ChEBI" id="CHEBI:29105"/>
        <label>2</label>
    </ligand>
</feature>
<feature type="binding site" evidence="1">
    <location>
        <position position="127"/>
    </location>
    <ligand>
        <name>Zn(2+)</name>
        <dbReference type="ChEBI" id="CHEBI:29105"/>
        <label>2</label>
    </ligand>
</feature>
<feature type="binding site" evidence="1">
    <location>
        <position position="185"/>
    </location>
    <ligand>
        <name>Zn(2+)</name>
        <dbReference type="ChEBI" id="CHEBI:29105"/>
        <label>1</label>
        <note>catalytic</note>
    </ligand>
</feature>
<feature type="binding site" evidence="1">
    <location>
        <position position="189"/>
    </location>
    <ligand>
        <name>NADP(+)</name>
        <dbReference type="ChEBI" id="CHEBI:58349"/>
    </ligand>
</feature>
<feature type="binding site" evidence="1">
    <location>
        <begin position="210"/>
        <end position="215"/>
    </location>
    <ligand>
        <name>NADP(+)</name>
        <dbReference type="ChEBI" id="CHEBI:58349"/>
    </ligand>
</feature>
<feature type="binding site" evidence="1">
    <location>
        <begin position="233"/>
        <end position="238"/>
    </location>
    <ligand>
        <name>NADP(+)</name>
        <dbReference type="ChEBI" id="CHEBI:58349"/>
    </ligand>
</feature>
<feature type="binding site" evidence="1">
    <location>
        <position position="273"/>
    </location>
    <ligand>
        <name>NADP(+)</name>
        <dbReference type="ChEBI" id="CHEBI:58349"/>
    </ligand>
</feature>
<feature type="binding site" evidence="1">
    <location>
        <position position="297"/>
    </location>
    <ligand>
        <name>NADP(+)</name>
        <dbReference type="ChEBI" id="CHEBI:58349"/>
    </ligand>
</feature>
<feature type="binding site" evidence="1">
    <location>
        <begin position="320"/>
        <end position="322"/>
    </location>
    <ligand>
        <name>NADP(+)</name>
        <dbReference type="ChEBI" id="CHEBI:58349"/>
    </ligand>
</feature>
<proteinExistence type="evidence at protein level"/>
<gene>
    <name evidence="4" type="primary">CAD7</name>
    <name evidence="5" type="synonym">FC1</name>
    <name type="ordered locus">Os04g0612700</name>
    <name type="ordered locus">LOC_Os04g52280</name>
    <name type="ORF">OSJNBa0070C17.13</name>
</gene>
<reference key="1">
    <citation type="journal article" date="2002" name="Nature">
        <title>Sequence and analysis of rice chromosome 4.</title>
        <authorList>
            <person name="Feng Q."/>
            <person name="Zhang Y."/>
            <person name="Hao P."/>
            <person name="Wang S."/>
            <person name="Fu G."/>
            <person name="Huang Y."/>
            <person name="Li Y."/>
            <person name="Zhu J."/>
            <person name="Liu Y."/>
            <person name="Hu X."/>
            <person name="Jia P."/>
            <person name="Zhang Y."/>
            <person name="Zhao Q."/>
            <person name="Ying K."/>
            <person name="Yu S."/>
            <person name="Tang Y."/>
            <person name="Weng Q."/>
            <person name="Zhang L."/>
            <person name="Lu Y."/>
            <person name="Mu J."/>
            <person name="Lu Y."/>
            <person name="Zhang L.S."/>
            <person name="Yu Z."/>
            <person name="Fan D."/>
            <person name="Liu X."/>
            <person name="Lu T."/>
            <person name="Li C."/>
            <person name="Wu Y."/>
            <person name="Sun T."/>
            <person name="Lei H."/>
            <person name="Li T."/>
            <person name="Hu H."/>
            <person name="Guan J."/>
            <person name="Wu M."/>
            <person name="Zhang R."/>
            <person name="Zhou B."/>
            <person name="Chen Z."/>
            <person name="Chen L."/>
            <person name="Jin Z."/>
            <person name="Wang R."/>
            <person name="Yin H."/>
            <person name="Cai Z."/>
            <person name="Ren S."/>
            <person name="Lv G."/>
            <person name="Gu W."/>
            <person name="Zhu G."/>
            <person name="Tu Y."/>
            <person name="Jia J."/>
            <person name="Zhang Y."/>
            <person name="Chen J."/>
            <person name="Kang H."/>
            <person name="Chen X."/>
            <person name="Shao C."/>
            <person name="Sun Y."/>
            <person name="Hu Q."/>
            <person name="Zhang X."/>
            <person name="Zhang W."/>
            <person name="Wang L."/>
            <person name="Ding C."/>
            <person name="Sheng H."/>
            <person name="Gu J."/>
            <person name="Chen S."/>
            <person name="Ni L."/>
            <person name="Zhu F."/>
            <person name="Chen W."/>
            <person name="Lan L."/>
            <person name="Lai Y."/>
            <person name="Cheng Z."/>
            <person name="Gu M."/>
            <person name="Jiang J."/>
            <person name="Li J."/>
            <person name="Hong G."/>
            <person name="Xue Y."/>
            <person name="Han B."/>
        </authorList>
    </citation>
    <scope>NUCLEOTIDE SEQUENCE [LARGE SCALE GENOMIC DNA]</scope>
    <source>
        <strain>cv. Nipponbare</strain>
    </source>
</reference>
<reference key="2">
    <citation type="journal article" date="2005" name="Nature">
        <title>The map-based sequence of the rice genome.</title>
        <authorList>
            <consortium name="International rice genome sequencing project (IRGSP)"/>
        </authorList>
    </citation>
    <scope>NUCLEOTIDE SEQUENCE [LARGE SCALE GENOMIC DNA]</scope>
    <source>
        <strain>cv. Nipponbare</strain>
    </source>
</reference>
<reference key="3">
    <citation type="journal article" date="2008" name="Nucleic Acids Res.">
        <title>The rice annotation project database (RAP-DB): 2008 update.</title>
        <authorList>
            <consortium name="The rice annotation project (RAP)"/>
        </authorList>
    </citation>
    <scope>GENOME REANNOTATION</scope>
    <source>
        <strain>cv. Nipponbare</strain>
    </source>
</reference>
<reference key="4">
    <citation type="journal article" date="2013" name="Rice">
        <title>Improvement of the Oryza sativa Nipponbare reference genome using next generation sequence and optical map data.</title>
        <authorList>
            <person name="Kawahara Y."/>
            <person name="de la Bastide M."/>
            <person name="Hamilton J.P."/>
            <person name="Kanamori H."/>
            <person name="McCombie W.R."/>
            <person name="Ouyang S."/>
            <person name="Schwartz D.C."/>
            <person name="Tanaka T."/>
            <person name="Wu J."/>
            <person name="Zhou S."/>
            <person name="Childs K.L."/>
            <person name="Davidson R.M."/>
            <person name="Lin H."/>
            <person name="Quesada-Ocampo L."/>
            <person name="Vaillancourt B."/>
            <person name="Sakai H."/>
            <person name="Lee S.S."/>
            <person name="Kim J."/>
            <person name="Numa H."/>
            <person name="Itoh T."/>
            <person name="Buell C.R."/>
            <person name="Matsumoto T."/>
        </authorList>
    </citation>
    <scope>GENOME REANNOTATION</scope>
    <source>
        <strain>cv. Nipponbare</strain>
    </source>
</reference>
<reference key="5">
    <citation type="journal article" date="2003" name="Science">
        <title>Collection, mapping, and annotation of over 28,000 cDNA clones from japonica rice.</title>
        <authorList>
            <consortium name="The rice full-length cDNA consortium"/>
        </authorList>
    </citation>
    <scope>NUCLEOTIDE SEQUENCE [LARGE SCALE MRNA]</scope>
    <source>
        <strain>cv. Nipponbare</strain>
    </source>
</reference>
<reference key="6">
    <citation type="journal article" date="2005" name="Planta">
        <title>Structure of the cinnamyl-alcohol dehydrogenase gene family in rice and promoter activity of a member associated with lignification.</title>
        <authorList>
            <person name="Tobias C.M."/>
            <person name="Chow E.K."/>
        </authorList>
    </citation>
    <scope>GENE FAMILY</scope>
    <scope>NOMENCLATURE</scope>
</reference>
<reference key="7">
    <citation type="journal article" date="2009" name="Plant Mol. Biol.">
        <title>FLEXIBLE CULM 1 encoding a cinnamyl-alcohol dehydrogenase controls culm mechanical strength in rice.</title>
        <authorList>
            <person name="Li X."/>
            <person name="Yang Y."/>
            <person name="Yao J."/>
            <person name="Chen G."/>
            <person name="Li X."/>
            <person name="Zhang Q."/>
            <person name="Wu C."/>
        </authorList>
    </citation>
    <scope>FUNCTION</scope>
    <scope>CATALYTIC ACTIVITY</scope>
    <scope>TISSUE SPECIFICITY</scope>
    <scope>DISRUPTION PHENOTYPE</scope>
    <scope>PATHWAY</scope>
</reference>
<keyword id="KW-0438">Lignin biosynthesis</keyword>
<keyword id="KW-0479">Metal-binding</keyword>
<keyword id="KW-0521">NADP</keyword>
<keyword id="KW-0560">Oxidoreductase</keyword>
<keyword id="KW-1185">Reference proteome</keyword>
<keyword id="KW-0862">Zinc</keyword>
<accession>Q0JA75</accession>
<accession>A0A0N7KJP2</accession>
<accession>Q7F9B4</accession>